<accession>Q6FDW7</accession>
<keyword id="KW-0067">ATP-binding</keyword>
<keyword id="KW-0173">Coenzyme A biosynthesis</keyword>
<keyword id="KW-0963">Cytoplasm</keyword>
<keyword id="KW-0418">Kinase</keyword>
<keyword id="KW-0547">Nucleotide-binding</keyword>
<keyword id="KW-0630">Potassium</keyword>
<keyword id="KW-0808">Transferase</keyword>
<gene>
    <name evidence="1" type="primary">coaX</name>
    <name type="ordered locus">ACIAD0840</name>
</gene>
<protein>
    <recommendedName>
        <fullName evidence="1">Type III pantothenate kinase</fullName>
        <ecNumber evidence="1">2.7.1.33</ecNumber>
    </recommendedName>
    <alternativeName>
        <fullName evidence="1">PanK-III</fullName>
    </alternativeName>
    <alternativeName>
        <fullName evidence="1">Pantothenic acid kinase</fullName>
    </alternativeName>
</protein>
<proteinExistence type="inferred from homology"/>
<name>COAX_ACIAD</name>
<dbReference type="EC" id="2.7.1.33" evidence="1"/>
<dbReference type="EMBL" id="CR543861">
    <property type="protein sequence ID" value="CAG67741.1"/>
    <property type="molecule type" value="Genomic_DNA"/>
</dbReference>
<dbReference type="RefSeq" id="WP_004922219.1">
    <property type="nucleotide sequence ID" value="NC_005966.1"/>
</dbReference>
<dbReference type="SMR" id="Q6FDW7"/>
<dbReference type="STRING" id="202950.GCA_001485005_02593"/>
<dbReference type="GeneID" id="45233304"/>
<dbReference type="KEGG" id="aci:ACIAD0840"/>
<dbReference type="eggNOG" id="COG1521">
    <property type="taxonomic scope" value="Bacteria"/>
</dbReference>
<dbReference type="HOGENOM" id="CLU_066627_0_1_6"/>
<dbReference type="OrthoDB" id="9781305at2"/>
<dbReference type="BioCyc" id="ASP62977:ACIAD_RS03880-MONOMER"/>
<dbReference type="UniPathway" id="UPA00241">
    <property type="reaction ID" value="UER00352"/>
</dbReference>
<dbReference type="Proteomes" id="UP000000430">
    <property type="component" value="Chromosome"/>
</dbReference>
<dbReference type="GO" id="GO:0005737">
    <property type="term" value="C:cytoplasm"/>
    <property type="evidence" value="ECO:0007669"/>
    <property type="project" value="UniProtKB-SubCell"/>
</dbReference>
<dbReference type="GO" id="GO:0005524">
    <property type="term" value="F:ATP binding"/>
    <property type="evidence" value="ECO:0007669"/>
    <property type="project" value="UniProtKB-UniRule"/>
</dbReference>
<dbReference type="GO" id="GO:0004594">
    <property type="term" value="F:pantothenate kinase activity"/>
    <property type="evidence" value="ECO:0007669"/>
    <property type="project" value="UniProtKB-UniRule"/>
</dbReference>
<dbReference type="GO" id="GO:0015937">
    <property type="term" value="P:coenzyme A biosynthetic process"/>
    <property type="evidence" value="ECO:0007669"/>
    <property type="project" value="UniProtKB-UniRule"/>
</dbReference>
<dbReference type="CDD" id="cd24015">
    <property type="entry name" value="ASKHA_NBD_PanK-III"/>
    <property type="match status" value="1"/>
</dbReference>
<dbReference type="Gene3D" id="3.30.420.40">
    <property type="match status" value="2"/>
</dbReference>
<dbReference type="HAMAP" id="MF_01274">
    <property type="entry name" value="Pantothen_kinase_3"/>
    <property type="match status" value="1"/>
</dbReference>
<dbReference type="InterPro" id="IPR043129">
    <property type="entry name" value="ATPase_NBD"/>
</dbReference>
<dbReference type="InterPro" id="IPR004619">
    <property type="entry name" value="Type_III_PanK"/>
</dbReference>
<dbReference type="NCBIfam" id="TIGR00671">
    <property type="entry name" value="baf"/>
    <property type="match status" value="1"/>
</dbReference>
<dbReference type="NCBIfam" id="NF009856">
    <property type="entry name" value="PRK13322.1-1"/>
    <property type="match status" value="1"/>
</dbReference>
<dbReference type="PANTHER" id="PTHR34265">
    <property type="entry name" value="TYPE III PANTOTHENATE KINASE"/>
    <property type="match status" value="1"/>
</dbReference>
<dbReference type="PANTHER" id="PTHR34265:SF1">
    <property type="entry name" value="TYPE III PANTOTHENATE KINASE"/>
    <property type="match status" value="1"/>
</dbReference>
<dbReference type="Pfam" id="PF03309">
    <property type="entry name" value="Pan_kinase"/>
    <property type="match status" value="1"/>
</dbReference>
<dbReference type="SUPFAM" id="SSF53067">
    <property type="entry name" value="Actin-like ATPase domain"/>
    <property type="match status" value="2"/>
</dbReference>
<evidence type="ECO:0000255" key="1">
    <source>
        <dbReference type="HAMAP-Rule" id="MF_01274"/>
    </source>
</evidence>
<organism>
    <name type="scientific">Acinetobacter baylyi (strain ATCC 33305 / BD413 / ADP1)</name>
    <dbReference type="NCBI Taxonomy" id="62977"/>
    <lineage>
        <taxon>Bacteria</taxon>
        <taxon>Pseudomonadati</taxon>
        <taxon>Pseudomonadota</taxon>
        <taxon>Gammaproteobacteria</taxon>
        <taxon>Moraxellales</taxon>
        <taxon>Moraxellaceae</taxon>
        <taxon>Acinetobacter</taxon>
    </lineage>
</organism>
<comment type="function">
    <text evidence="1">Catalyzes the phosphorylation of pantothenate (Pan), the first step in CoA biosynthesis.</text>
</comment>
<comment type="catalytic activity">
    <reaction evidence="1">
        <text>(R)-pantothenate + ATP = (R)-4'-phosphopantothenate + ADP + H(+)</text>
        <dbReference type="Rhea" id="RHEA:16373"/>
        <dbReference type="ChEBI" id="CHEBI:10986"/>
        <dbReference type="ChEBI" id="CHEBI:15378"/>
        <dbReference type="ChEBI" id="CHEBI:29032"/>
        <dbReference type="ChEBI" id="CHEBI:30616"/>
        <dbReference type="ChEBI" id="CHEBI:456216"/>
        <dbReference type="EC" id="2.7.1.33"/>
    </reaction>
</comment>
<comment type="cofactor">
    <cofactor evidence="1">
        <name>NH4(+)</name>
        <dbReference type="ChEBI" id="CHEBI:28938"/>
    </cofactor>
    <cofactor evidence="1">
        <name>K(+)</name>
        <dbReference type="ChEBI" id="CHEBI:29103"/>
    </cofactor>
    <text evidence="1">A monovalent cation. Ammonium or potassium.</text>
</comment>
<comment type="pathway">
    <text evidence="1">Cofactor biosynthesis; coenzyme A biosynthesis; CoA from (R)-pantothenate: step 1/5.</text>
</comment>
<comment type="subunit">
    <text evidence="1">Homodimer.</text>
</comment>
<comment type="subcellular location">
    <subcellularLocation>
        <location evidence="1">Cytoplasm</location>
    </subcellularLocation>
</comment>
<comment type="similarity">
    <text evidence="1">Belongs to the type III pantothenate kinase family.</text>
</comment>
<reference key="1">
    <citation type="journal article" date="2004" name="Nucleic Acids Res.">
        <title>Unique features revealed by the genome sequence of Acinetobacter sp. ADP1, a versatile and naturally transformation competent bacterium.</title>
        <authorList>
            <person name="Barbe V."/>
            <person name="Vallenet D."/>
            <person name="Fonknechten N."/>
            <person name="Kreimeyer A."/>
            <person name="Oztas S."/>
            <person name="Labarre L."/>
            <person name="Cruveiller S."/>
            <person name="Robert C."/>
            <person name="Duprat S."/>
            <person name="Wincker P."/>
            <person name="Ornston L.N."/>
            <person name="Weissenbach J."/>
            <person name="Marliere P."/>
            <person name="Cohen G.N."/>
            <person name="Medigue C."/>
        </authorList>
    </citation>
    <scope>NUCLEOTIDE SEQUENCE [LARGE SCALE GENOMIC DNA]</scope>
    <source>
        <strain>ATCC 33305 / BD413 / ADP1</strain>
    </source>
</reference>
<sequence>MKQLWLDIGNTRLKYWITQNETVIEHAAELHLQSPSDLLLGLIQHFNHQNIQKVGVSSVLDQHNNDRIRSILKRLHIPMIMAKVHQEYAALRCGYDHPEQLGIDRWLQVLAVAQPDRNVCVIGCGTALTIDLVKGYQHLGGYILPNLYLQRDALIQNTKGIKIPDSAFDDLEPGHNTIDAVHHGILLGLVSTIQTIMQQSPQQLVLTGGDAPLFAKFLQPYHPQIEPDLLLKGLQHYVRHQLP</sequence>
<feature type="chain" id="PRO_0000267487" description="Type III pantothenate kinase">
    <location>
        <begin position="1"/>
        <end position="243"/>
    </location>
</feature>
<feature type="active site" description="Proton acceptor" evidence="1">
    <location>
        <position position="104"/>
    </location>
</feature>
<feature type="binding site" evidence="1">
    <location>
        <begin position="7"/>
        <end position="14"/>
    </location>
    <ligand>
        <name>ATP</name>
        <dbReference type="ChEBI" id="CHEBI:30616"/>
    </ligand>
</feature>
<feature type="binding site" evidence="1">
    <location>
        <position position="95"/>
    </location>
    <ligand>
        <name>substrate</name>
    </ligand>
</feature>
<feature type="binding site" evidence="1">
    <location>
        <begin position="102"/>
        <end position="105"/>
    </location>
    <ligand>
        <name>substrate</name>
    </ligand>
</feature>
<feature type="binding site" evidence="1">
    <location>
        <position position="126"/>
    </location>
    <ligand>
        <name>ATP</name>
        <dbReference type="ChEBI" id="CHEBI:30616"/>
    </ligand>
</feature>
<feature type="binding site" evidence="1">
    <location>
        <position position="177"/>
    </location>
    <ligand>
        <name>substrate</name>
    </ligand>
</feature>